<gene>
    <name type="primary">nep1</name>
    <name type="ordered locus">SSO2226</name>
</gene>
<accession>Q97WJ0</accession>
<evidence type="ECO:0000255" key="1">
    <source>
        <dbReference type="HAMAP-Rule" id="MF_00554"/>
    </source>
</evidence>
<evidence type="ECO:0000305" key="2"/>
<proteinExistence type="inferred from homology"/>
<organism>
    <name type="scientific">Saccharolobus solfataricus (strain ATCC 35092 / DSM 1617 / JCM 11322 / P2)</name>
    <name type="common">Sulfolobus solfataricus</name>
    <dbReference type="NCBI Taxonomy" id="273057"/>
    <lineage>
        <taxon>Archaea</taxon>
        <taxon>Thermoproteota</taxon>
        <taxon>Thermoprotei</taxon>
        <taxon>Sulfolobales</taxon>
        <taxon>Sulfolobaceae</taxon>
        <taxon>Saccharolobus</taxon>
    </lineage>
</organism>
<dbReference type="EC" id="2.1.1.-" evidence="1"/>
<dbReference type="EMBL" id="AE006641">
    <property type="protein sequence ID" value="AAK42396.1"/>
    <property type="status" value="ALT_INIT"/>
    <property type="molecule type" value="Genomic_DNA"/>
</dbReference>
<dbReference type="PIR" id="E90392">
    <property type="entry name" value="E90392"/>
</dbReference>
<dbReference type="SMR" id="Q97WJ0"/>
<dbReference type="FunCoup" id="Q97WJ0">
    <property type="interactions" value="164"/>
</dbReference>
<dbReference type="STRING" id="273057.SSO2226"/>
<dbReference type="PaxDb" id="273057-SSO2226"/>
<dbReference type="EnsemblBacteria" id="AAK42396">
    <property type="protein sequence ID" value="AAK42396"/>
    <property type="gene ID" value="SSO2226"/>
</dbReference>
<dbReference type="KEGG" id="sso:SSO2226"/>
<dbReference type="PATRIC" id="fig|273057.12.peg.2322"/>
<dbReference type="eggNOG" id="arCOG04122">
    <property type="taxonomic scope" value="Archaea"/>
</dbReference>
<dbReference type="HOGENOM" id="CLU_055846_1_3_2"/>
<dbReference type="InParanoid" id="Q97WJ0"/>
<dbReference type="PhylomeDB" id="Q97WJ0"/>
<dbReference type="Proteomes" id="UP000001974">
    <property type="component" value="Chromosome"/>
</dbReference>
<dbReference type="GO" id="GO:0070037">
    <property type="term" value="F:rRNA (pseudouridine) methyltransferase activity"/>
    <property type="evidence" value="ECO:0000318"/>
    <property type="project" value="GO_Central"/>
</dbReference>
<dbReference type="GO" id="GO:0019843">
    <property type="term" value="F:rRNA binding"/>
    <property type="evidence" value="ECO:0000318"/>
    <property type="project" value="GO_Central"/>
</dbReference>
<dbReference type="GO" id="GO:0070475">
    <property type="term" value="P:rRNA base methylation"/>
    <property type="evidence" value="ECO:0000318"/>
    <property type="project" value="GO_Central"/>
</dbReference>
<dbReference type="CDD" id="cd18088">
    <property type="entry name" value="Nep1-like"/>
    <property type="match status" value="1"/>
</dbReference>
<dbReference type="FunFam" id="3.40.1280.10:FF:000042">
    <property type="entry name" value="Ribosomal RNA small subunit methyltransferase Nep1"/>
    <property type="match status" value="1"/>
</dbReference>
<dbReference type="Gene3D" id="3.40.1280.10">
    <property type="match status" value="1"/>
</dbReference>
<dbReference type="HAMAP" id="MF_00554">
    <property type="entry name" value="NEP1"/>
    <property type="match status" value="1"/>
</dbReference>
<dbReference type="InterPro" id="IPR029028">
    <property type="entry name" value="Alpha/beta_knot_MTases"/>
</dbReference>
<dbReference type="InterPro" id="IPR005304">
    <property type="entry name" value="Rbsml_bgen_MeTrfase_EMG1/NEP1"/>
</dbReference>
<dbReference type="InterPro" id="IPR023503">
    <property type="entry name" value="Ribosome_NEP1_arc"/>
</dbReference>
<dbReference type="InterPro" id="IPR029026">
    <property type="entry name" value="tRNA_m1G_MTases_N"/>
</dbReference>
<dbReference type="NCBIfam" id="NF003203">
    <property type="entry name" value="PRK04171.1-1"/>
    <property type="match status" value="1"/>
</dbReference>
<dbReference type="PANTHER" id="PTHR12636">
    <property type="entry name" value="NEP1/MRA1"/>
    <property type="match status" value="1"/>
</dbReference>
<dbReference type="PANTHER" id="PTHR12636:SF5">
    <property type="entry name" value="RIBOSOMAL RNA SMALL SUBUNIT METHYLTRANSFERASE NEP1"/>
    <property type="match status" value="1"/>
</dbReference>
<dbReference type="Pfam" id="PF03587">
    <property type="entry name" value="EMG1"/>
    <property type="match status" value="1"/>
</dbReference>
<dbReference type="SUPFAM" id="SSF75217">
    <property type="entry name" value="alpha/beta knot"/>
    <property type="match status" value="1"/>
</dbReference>
<sequence length="218" mass="24933">MHLNIILLEASLELVPKEIVNHPAVIKNAKRRNKKPEDTLLDISLHYHAMKYLENSHKRGRPDILHQALLVILTDPVIKGDIFIHTIQSKIIKVNPNMRPPKNYLRFIGLMEQLLKYGKIPINGDETLMEVTNLTLDNIVNRYDLILLSEKGEKINPEEICKLDEKWLLGIGAFPHGDFSDKILNLAKKIYSISGFPLETQQVLCRIFSACNSILGWP</sequence>
<protein>
    <recommendedName>
        <fullName evidence="1">Ribosomal RNA small subunit methyltransferase Nep1</fullName>
        <ecNumber evidence="1">2.1.1.-</ecNumber>
    </recommendedName>
    <alternativeName>
        <fullName evidence="1">16S rRNA (pseudouridine-N1-)-methyltransferase Nep1</fullName>
    </alternativeName>
</protein>
<reference key="1">
    <citation type="journal article" date="2001" name="Proc. Natl. Acad. Sci. U.S.A.">
        <title>The complete genome of the crenarchaeon Sulfolobus solfataricus P2.</title>
        <authorList>
            <person name="She Q."/>
            <person name="Singh R.K."/>
            <person name="Confalonieri F."/>
            <person name="Zivanovic Y."/>
            <person name="Allard G."/>
            <person name="Awayez M.J."/>
            <person name="Chan-Weiher C.C.-Y."/>
            <person name="Clausen I.G."/>
            <person name="Curtis B.A."/>
            <person name="De Moors A."/>
            <person name="Erauso G."/>
            <person name="Fletcher C."/>
            <person name="Gordon P.M.K."/>
            <person name="Heikamp-de Jong I."/>
            <person name="Jeffries A.C."/>
            <person name="Kozera C.J."/>
            <person name="Medina N."/>
            <person name="Peng X."/>
            <person name="Thi-Ngoc H.P."/>
            <person name="Redder P."/>
            <person name="Schenk M.E."/>
            <person name="Theriault C."/>
            <person name="Tolstrup N."/>
            <person name="Charlebois R.L."/>
            <person name="Doolittle W.F."/>
            <person name="Duguet M."/>
            <person name="Gaasterland T."/>
            <person name="Garrett R.A."/>
            <person name="Ragan M.A."/>
            <person name="Sensen C.W."/>
            <person name="Van der Oost J."/>
        </authorList>
    </citation>
    <scope>NUCLEOTIDE SEQUENCE [LARGE SCALE GENOMIC DNA]</scope>
    <source>
        <strain>ATCC 35092 / DSM 1617 / JCM 11322 / P2</strain>
    </source>
</reference>
<comment type="function">
    <text evidence="1">Methyltransferase involved in ribosomal biogenesis. Specifically catalyzes the N1-methylation of the pseudouridine corresponding to position 914 in M.jannaschii 16S rRNA.</text>
</comment>
<comment type="catalytic activity">
    <reaction evidence="1">
        <text>a pseudouridine in rRNA + S-adenosyl-L-methionine = an N(1)-methylpseudouridine in rRNA + S-adenosyl-L-homocysteine + H(+)</text>
        <dbReference type="Rhea" id="RHEA:46696"/>
        <dbReference type="Rhea" id="RHEA-COMP:11634"/>
        <dbReference type="Rhea" id="RHEA-COMP:13933"/>
        <dbReference type="ChEBI" id="CHEBI:15378"/>
        <dbReference type="ChEBI" id="CHEBI:57856"/>
        <dbReference type="ChEBI" id="CHEBI:59789"/>
        <dbReference type="ChEBI" id="CHEBI:65314"/>
        <dbReference type="ChEBI" id="CHEBI:74890"/>
    </reaction>
</comment>
<comment type="subunit">
    <text evidence="1">Homodimer.</text>
</comment>
<comment type="similarity">
    <text evidence="2">Belongs to the class IV-like SAM-binding methyltransferase superfamily. RNA methyltransferase NEP1 family.</text>
</comment>
<comment type="sequence caution" evidence="2">
    <conflict type="erroneous initiation">
        <sequence resource="EMBL-CDS" id="AAK42396"/>
    </conflict>
</comment>
<keyword id="KW-0489">Methyltransferase</keyword>
<keyword id="KW-1185">Reference proteome</keyword>
<keyword id="KW-0690">Ribosome biogenesis</keyword>
<keyword id="KW-0694">RNA-binding</keyword>
<keyword id="KW-0698">rRNA processing</keyword>
<keyword id="KW-0699">rRNA-binding</keyword>
<keyword id="KW-0949">S-adenosyl-L-methionine</keyword>
<keyword id="KW-0808">Transferase</keyword>
<name>NEP1_SACS2</name>
<feature type="chain" id="PRO_0000158622" description="Ribosomal RNA small subunit methyltransferase Nep1">
    <location>
        <begin position="1"/>
        <end position="218"/>
    </location>
</feature>
<feature type="binding site" evidence="1">
    <location>
        <position position="172"/>
    </location>
    <ligand>
        <name>S-adenosyl-L-methionine</name>
        <dbReference type="ChEBI" id="CHEBI:59789"/>
    </ligand>
</feature>
<feature type="binding site" evidence="1">
    <location>
        <position position="177"/>
    </location>
    <ligand>
        <name>S-adenosyl-L-methionine</name>
        <dbReference type="ChEBI" id="CHEBI:59789"/>
    </ligand>
</feature>
<feature type="binding site" evidence="1">
    <location>
        <begin position="193"/>
        <end position="198"/>
    </location>
    <ligand>
        <name>S-adenosyl-L-methionine</name>
        <dbReference type="ChEBI" id="CHEBI:59789"/>
    </ligand>
</feature>
<feature type="site" description="Interaction with substrate rRNA" evidence="1">
    <location>
        <position position="61"/>
    </location>
</feature>
<feature type="site" description="Stabilizes Arg-61" evidence="1">
    <location>
        <position position="63"/>
    </location>
</feature>
<feature type="site" description="Interaction with substrate rRNA" evidence="1">
    <location>
        <position position="99"/>
    </location>
</feature>
<feature type="site" description="Interaction with substrate rRNA" evidence="1">
    <location>
        <position position="102"/>
    </location>
</feature>
<feature type="site" description="Interaction with substrate rRNA" evidence="1">
    <location>
        <position position="106"/>
    </location>
</feature>